<comment type="function">
    <text evidence="1">Catalyzes the oxidation of primary alcohols including methanol.</text>
</comment>
<comment type="catalytic activity">
    <reaction>
        <text>2 Fe(III)-[cytochrome cL] + a primary alcohol = 2 Fe(II)-[cytochrome cL] + an aldehyde + 2 H(+)</text>
        <dbReference type="Rhea" id="RHEA:51004"/>
        <dbReference type="Rhea" id="RHEA-COMP:12863"/>
        <dbReference type="Rhea" id="RHEA-COMP:12864"/>
        <dbReference type="ChEBI" id="CHEBI:15378"/>
        <dbReference type="ChEBI" id="CHEBI:15734"/>
        <dbReference type="ChEBI" id="CHEBI:17478"/>
        <dbReference type="ChEBI" id="CHEBI:29033"/>
        <dbReference type="ChEBI" id="CHEBI:29034"/>
        <dbReference type="EC" id="1.1.2.7"/>
    </reaction>
</comment>
<comment type="cofactor">
    <cofactor evidence="1">
        <name>pyrroloquinoline quinone</name>
        <dbReference type="ChEBI" id="CHEBI:58442"/>
    </cofactor>
    <text evidence="1">Binds 1 PQQ group per subunit. PQQ is inserted between disulfide Cys-130-Cys-131 and the indole ring of Trp-270.</text>
</comment>
<comment type="cofactor">
    <cofactor evidence="1">
        <name>Ca(2+)</name>
        <dbReference type="ChEBI" id="CHEBI:29108"/>
    </cofactor>
    <text evidence="1">Binds 1 Ca(2+) ion per subunit.</text>
</comment>
<comment type="subunit">
    <text>Heterotetramer composed of 2 alpha and 2 beta subunits.</text>
</comment>
<comment type="subcellular location">
    <subcellularLocation>
        <location>Cell inner membrane</location>
        <topology>Peripheral membrane protein</topology>
        <orientation>Periplasmic side</orientation>
    </subcellularLocation>
    <text>Periplasmic, but associated with inner membrane.</text>
</comment>
<comment type="similarity">
    <text evidence="3">Belongs to the bacterial PQQ dehydrogenase family.</text>
</comment>
<gene>
    <name type="primary">moxF</name>
</gene>
<proteinExistence type="evidence at protein level"/>
<feature type="signal peptide" evidence="2">
    <location>
        <begin position="1"/>
        <end position="27"/>
    </location>
</feature>
<feature type="chain" id="PRO_0000025567" description="Methanol dehydrogenase [cytochrome c] subunit 1">
    <location>
        <begin position="28"/>
        <end position="626"/>
    </location>
</feature>
<feature type="active site" description="Proton acceptor" evidence="1">
    <location>
        <position position="330"/>
    </location>
</feature>
<feature type="binding site" evidence="1">
    <location>
        <position position="204"/>
    </location>
    <ligand>
        <name>Ca(2+)</name>
        <dbReference type="ChEBI" id="CHEBI:29108"/>
    </ligand>
</feature>
<feature type="binding site" evidence="1">
    <location>
        <position position="288"/>
    </location>
    <ligand>
        <name>Ca(2+)</name>
        <dbReference type="ChEBI" id="CHEBI:29108"/>
    </ligand>
</feature>
<feature type="disulfide bond" evidence="1">
    <location>
        <begin position="130"/>
        <end position="131"/>
    </location>
</feature>
<feature type="disulfide bond" evidence="1">
    <location>
        <begin position="413"/>
        <end position="442"/>
    </location>
</feature>
<reference key="1">
    <citation type="journal article" date="1988" name="J. Bacteriol.">
        <title>Nucleotide sequence and transcriptional start site of the Methylobacterium organophilum XX methanol dehydrogenase structural gene.</title>
        <authorList>
            <person name="Machlin S.M."/>
            <person name="Hanson R.S."/>
        </authorList>
    </citation>
    <scope>NUCLEOTIDE SEQUENCE [GENOMIC DNA]</scope>
    <scope>PROTEIN SEQUENCE OF 28-43</scope>
    <source>
        <strain>ATCC 27886 / DSM 760 / JCM 2833 / CCUG 55902 / LMG 6083 / NBRC 15689 / NCIMB 11278 / VKM B-2066 / XX</strain>
    </source>
</reference>
<sequence length="626" mass="68677">MSRFVTSVSALAMLALAPAALSSVAYANDKLVELSKSDDNWVMPGKNYDSNNYSELKQVNKSNVKQLRPAWTFSTGLLNGHEGAPLVVDGKMYVHTSFPNNTFALDLDDPGHILWQDKPKQNPAARAVACCDLVNRGLAYWPGDGKTPALILKTQLDRHVVALNAETGETVWKVENSDIKVGSTLTIAPYVVKDKVIIGSSGAELGVRGYLTAYDVKTGGQVWRAYATGPDKDLLLADDFNVKNAHYGQKGLGTATWEGDAWKIGGGTNWGWYAYDPGTNLIYFGTGNPAPWNETMRPGDNKWTMTIFGRDADTGEAKFGYQKTPHDEWDYAGVNVMMPSEQKDKDGKTRKLLTHPDRNGIVYTLDRTDGALVSANKLDDTVNVFKTVDLKTGQPVRDPEYGTRMDHLAKDVCPSAMGYHNQGHDSYDPKRELFFMGINHICMDWEPFMLPYRAGQFFVGATLNMYPGPKGDRQNYEGLGQIKAYNAITGSYKWEKMERFAVWGGTLATAGDLVFYGTLDGYLKARDSDTGDLLWKFKIPSGAIGYPMTYTHKGTQYVAIYYGVGGWPGVGLVFDLADPTAGLGAVGAFKKLANYTQQGGGVIVFSLDGKGPYDDPNVGEWKSASK</sequence>
<protein>
    <recommendedName>
        <fullName>Methanol dehydrogenase [cytochrome c] subunit 1</fullName>
        <ecNumber>1.1.2.7</ecNumber>
    </recommendedName>
    <alternativeName>
        <fullName>MDH large subunit alpha</fullName>
    </alternativeName>
    <alternativeName>
        <fullName>MEDH</fullName>
    </alternativeName>
</protein>
<organism>
    <name type="scientific">Methylobacterium organophilum</name>
    <dbReference type="NCBI Taxonomy" id="410"/>
    <lineage>
        <taxon>Bacteria</taxon>
        <taxon>Pseudomonadati</taxon>
        <taxon>Pseudomonadota</taxon>
        <taxon>Alphaproteobacteria</taxon>
        <taxon>Hyphomicrobiales</taxon>
        <taxon>Methylobacteriaceae</taxon>
        <taxon>Methylobacterium</taxon>
    </lineage>
</organism>
<keyword id="KW-0106">Calcium</keyword>
<keyword id="KW-0997">Cell inner membrane</keyword>
<keyword id="KW-1003">Cell membrane</keyword>
<keyword id="KW-0903">Direct protein sequencing</keyword>
<keyword id="KW-1015">Disulfide bond</keyword>
<keyword id="KW-0472">Membrane</keyword>
<keyword id="KW-0479">Metal-binding</keyword>
<keyword id="KW-0485">Methanol utilization</keyword>
<keyword id="KW-0560">Oxidoreductase</keyword>
<keyword id="KW-0634">PQQ</keyword>
<keyword id="KW-0732">Signal</keyword>
<evidence type="ECO:0000250" key="1"/>
<evidence type="ECO:0000269" key="2">
    <source>
    </source>
</evidence>
<evidence type="ECO:0000305" key="3"/>
<dbReference type="EC" id="1.1.2.7"/>
<dbReference type="EMBL" id="M22629">
    <property type="protein sequence ID" value="AAA50289.1"/>
    <property type="molecule type" value="Genomic_DNA"/>
</dbReference>
<dbReference type="SMR" id="P15279"/>
<dbReference type="BioCyc" id="MetaCyc:MONOMER-3927"/>
<dbReference type="GO" id="GO:0030288">
    <property type="term" value="C:outer membrane-bounded periplasmic space"/>
    <property type="evidence" value="ECO:0007669"/>
    <property type="project" value="InterPro"/>
</dbReference>
<dbReference type="GO" id="GO:0005886">
    <property type="term" value="C:plasma membrane"/>
    <property type="evidence" value="ECO:0007669"/>
    <property type="project" value="UniProtKB-SubCell"/>
</dbReference>
<dbReference type="GO" id="GO:0052933">
    <property type="term" value="F:alcohol dehydrogenase (cytochrome c(L)) activity"/>
    <property type="evidence" value="ECO:0007669"/>
    <property type="project" value="UniProtKB-EC"/>
</dbReference>
<dbReference type="GO" id="GO:0005509">
    <property type="term" value="F:calcium ion binding"/>
    <property type="evidence" value="ECO:0007669"/>
    <property type="project" value="InterPro"/>
</dbReference>
<dbReference type="GO" id="GO:0015945">
    <property type="term" value="P:methanol metabolic process"/>
    <property type="evidence" value="ECO:0007669"/>
    <property type="project" value="UniProtKB-KW"/>
</dbReference>
<dbReference type="CDD" id="cd10278">
    <property type="entry name" value="PQQ_MDH"/>
    <property type="match status" value="1"/>
</dbReference>
<dbReference type="FunFam" id="2.140.10.10:FF:000003">
    <property type="entry name" value="Methanol dehydrogenase, large subunit"/>
    <property type="match status" value="1"/>
</dbReference>
<dbReference type="Gene3D" id="2.140.10.10">
    <property type="entry name" value="Quinoprotein alcohol dehydrogenase-like superfamily"/>
    <property type="match status" value="1"/>
</dbReference>
<dbReference type="InterPro" id="IPR018391">
    <property type="entry name" value="PQQ_b-propeller_rpt"/>
</dbReference>
<dbReference type="InterPro" id="IPR017512">
    <property type="entry name" value="PQQ_MeOH/EtOH_DH"/>
</dbReference>
<dbReference type="InterPro" id="IPR002372">
    <property type="entry name" value="PQQ_rpt_dom"/>
</dbReference>
<dbReference type="InterPro" id="IPR011047">
    <property type="entry name" value="Quinoprotein_ADH-like_sf"/>
</dbReference>
<dbReference type="InterPro" id="IPR001479">
    <property type="entry name" value="Quinoprotein_DH_CS"/>
</dbReference>
<dbReference type="NCBIfam" id="TIGR03075">
    <property type="entry name" value="PQQ_enz_alc_DH"/>
    <property type="match status" value="1"/>
</dbReference>
<dbReference type="PANTHER" id="PTHR32303">
    <property type="entry name" value="QUINOPROTEIN ALCOHOL DEHYDROGENASE (CYTOCHROME C)"/>
    <property type="match status" value="1"/>
</dbReference>
<dbReference type="PANTHER" id="PTHR32303:SF4">
    <property type="entry name" value="QUINOPROTEIN GLUCOSE DEHYDROGENASE"/>
    <property type="match status" value="1"/>
</dbReference>
<dbReference type="Pfam" id="PF01011">
    <property type="entry name" value="PQQ"/>
    <property type="match status" value="2"/>
</dbReference>
<dbReference type="SMART" id="SM00564">
    <property type="entry name" value="PQQ"/>
    <property type="match status" value="3"/>
</dbReference>
<dbReference type="SUPFAM" id="SSF50998">
    <property type="entry name" value="Quinoprotein alcohol dehydrogenase-like"/>
    <property type="match status" value="1"/>
</dbReference>
<dbReference type="PROSITE" id="PS00363">
    <property type="entry name" value="BACTERIAL_PQQ_1"/>
    <property type="match status" value="1"/>
</dbReference>
<dbReference type="PROSITE" id="PS00364">
    <property type="entry name" value="BACTERIAL_PQQ_2"/>
    <property type="match status" value="1"/>
</dbReference>
<accession>P15279</accession>
<name>DHM1_METOR</name>